<comment type="function">
    <text evidence="5">May be involved in protein-linked oligosaccharide phosphorylation since the deletion reduces the negative charge of the cell surface. Involved in the resistance to EDTA, cadmium chloride, cycloheximide, 6-dimethylaminopurine, methyl caffeate, beta-chloro-L-alanine, caffeine and cerulenin.</text>
</comment>
<comment type="interaction">
    <interactant intactId="EBI-2113927">
        <id>Q12502</id>
    </interactant>
    <interactant intactId="EBI-16219">
        <id>P39940</id>
        <label>RSP5</label>
    </interactant>
    <organismsDiffer>false</organismsDiffer>
    <experiments>3</experiments>
</comment>
<comment type="subcellular location">
    <subcellularLocation>
        <location evidence="3">Cytoplasm</location>
    </subcellularLocation>
    <subcellularLocation>
        <location evidence="3">Golgi apparatus</location>
    </subcellularLocation>
</comment>
<comment type="induction">
    <text>Expressed periodically during cell division with a peak during M phase.</text>
</comment>
<comment type="miscellaneous">
    <text evidence="4">Present with 295 molecules/cell in log phase SD medium.</text>
</comment>
<comment type="similarity">
    <text evidence="6">Belongs to the LDB19 family.</text>
</comment>
<name>LDB19_YEAST</name>
<feature type="chain" id="PRO_0000240388" description="Protein LDB19">
    <location>
        <begin position="1"/>
        <end position="818"/>
    </location>
</feature>
<feature type="region of interest" description="Disordered" evidence="1">
    <location>
        <begin position="1"/>
        <end position="25"/>
    </location>
</feature>
<feature type="region of interest" description="Disordered" evidence="1">
    <location>
        <begin position="352"/>
        <end position="374"/>
    </location>
</feature>
<feature type="region of interest" description="Disordered" evidence="1">
    <location>
        <begin position="388"/>
        <end position="436"/>
    </location>
</feature>
<feature type="region of interest" description="Disordered" evidence="1">
    <location>
        <begin position="568"/>
        <end position="590"/>
    </location>
</feature>
<feature type="region of interest" description="Disordered" evidence="1">
    <location>
        <begin position="607"/>
        <end position="644"/>
    </location>
</feature>
<feature type="compositionally biased region" description="Basic and acidic residues" evidence="1">
    <location>
        <begin position="352"/>
        <end position="361"/>
    </location>
</feature>
<feature type="compositionally biased region" description="Polar residues" evidence="1">
    <location>
        <begin position="402"/>
        <end position="413"/>
    </location>
</feature>
<feature type="compositionally biased region" description="Acidic residues" evidence="1">
    <location>
        <begin position="416"/>
        <end position="430"/>
    </location>
</feature>
<feature type="compositionally biased region" description="Polar residues" evidence="1">
    <location>
        <begin position="620"/>
        <end position="629"/>
    </location>
</feature>
<feature type="modified residue" description="Phosphothreonine" evidence="7">
    <location>
        <position position="93"/>
    </location>
</feature>
<feature type="modified residue" description="Phosphoserine" evidence="8">
    <location>
        <position position="384"/>
    </location>
</feature>
<feature type="modified residue" description="Phosphothreonine" evidence="8">
    <location>
        <position position="619"/>
    </location>
</feature>
<feature type="modified residue" description="Phosphoserine" evidence="9">
    <location>
        <position position="808"/>
    </location>
</feature>
<feature type="cross-link" description="Glycyl lysine isopeptide (Lys-Gly) (interchain with G-Cter in ubiquitin)" evidence="2">
    <location>
        <position position="486"/>
    </location>
</feature>
<gene>
    <name type="primary">LDB19</name>
    <name type="ordered locus">YOR322C</name>
    <name type="ORF">O6152</name>
</gene>
<keyword id="KW-0131">Cell cycle</keyword>
<keyword id="KW-0963">Cytoplasm</keyword>
<keyword id="KW-0333">Golgi apparatus</keyword>
<keyword id="KW-1017">Isopeptide bond</keyword>
<keyword id="KW-0597">Phosphoprotein</keyword>
<keyword id="KW-1185">Reference proteome</keyword>
<keyword id="KW-0832">Ubl conjugation</keyword>
<sequence length="818" mass="89826">MAFSRLTSTHQSNHNGYSNSNKKGQSLPLTLSIDVESPPCVLYGSAMESSGAVLSGLFTVTVVDPYSSAEDKSLKNTESNVSTTSKSLKRKSTFGSALSSRLSSLSASTSNISPSTSSTSISHSPTPANLRIMAGYTKITITSVTLSLVQKIHFHKPFVPNISSMQTCMNCKTKITNMKSWEIQSNTQDLSVGSHSYPFSYLIPGSVPCSSSLGATAETQVKYELIAVVTYIDPHRNSFSSGHSTPRKEGSSSKKRLLQLAMPIAVTRSIPRGPDKNSLRVFPPTELTAAAVLPNVVYPKSTFPLEMKLDGVSSGDRRWRMRKLSWRIEETTRVKAHACPVHKHELRQLEEQVKIKESEKSKKPRSHIKRYGELGPQIRVAVNSLENMPSQRLPGEPGREQAPNSSGPASTGNVGLDDENPVNEDEEDQPGSEFIHPSDDALRQELLMQQQRARQQQLQQELKNNSSLFTEEVRIISKGEMKSGWKTDFDNNGKIELVTEIDCMGLNSGVSNPVMHASTLQTPSTGNKKPSINVACDIQDPNLGLYVSHILAVEIVVAEETLQYANGQPIRKPNSKNKKETNNNTMNVHNPDQRLAELSPIFANRNTPKVRRMGPEDITPVNSNKSNHSTNKEKASNGASNSNIVSVPTGAARVLRMQFRLTVTERSGLGISWDEEVPPIYQDVELLSPPCYELSINNGIKNKLYSTMSTPVRSEDDFVGGSDEDIGNYESQGLEPGPNVQEVTITQNKLTIPPTAHHYQPASSSQRSLTTVQSPPLESVVSVQGSVPFRGHVLTPHSTRDIRIQNFSDFLDSNRITQ</sequence>
<dbReference type="EMBL" id="X90565">
    <property type="protein sequence ID" value="CAA62178.1"/>
    <property type="molecule type" value="Genomic_DNA"/>
</dbReference>
<dbReference type="EMBL" id="Z75230">
    <property type="protein sequence ID" value="CAA99642.1"/>
    <property type="molecule type" value="Genomic_DNA"/>
</dbReference>
<dbReference type="EMBL" id="BK006948">
    <property type="protein sequence ID" value="DAA11086.1"/>
    <property type="molecule type" value="Genomic_DNA"/>
</dbReference>
<dbReference type="PIR" id="S58333">
    <property type="entry name" value="S58333"/>
</dbReference>
<dbReference type="RefSeq" id="NP_014967.3">
    <property type="nucleotide sequence ID" value="NM_001183742.3"/>
</dbReference>
<dbReference type="BioGRID" id="34708">
    <property type="interactions" value="199"/>
</dbReference>
<dbReference type="FunCoup" id="Q12502">
    <property type="interactions" value="43"/>
</dbReference>
<dbReference type="IntAct" id="Q12502">
    <property type="interactions" value="5"/>
</dbReference>
<dbReference type="MINT" id="Q12502"/>
<dbReference type="STRING" id="4932.YOR322C"/>
<dbReference type="GlyGen" id="Q12502">
    <property type="glycosylation" value="5 sites, 1 O-linked glycan (3 sites)"/>
</dbReference>
<dbReference type="iPTMnet" id="Q12502"/>
<dbReference type="PaxDb" id="4932-YOR322C"/>
<dbReference type="PeptideAtlas" id="Q12502"/>
<dbReference type="EnsemblFungi" id="YOR322C_mRNA">
    <property type="protein sequence ID" value="YOR322C"/>
    <property type="gene ID" value="YOR322C"/>
</dbReference>
<dbReference type="GeneID" id="854500"/>
<dbReference type="KEGG" id="sce:YOR322C"/>
<dbReference type="AGR" id="SGD:S000005849"/>
<dbReference type="SGD" id="S000005849">
    <property type="gene designation" value="LDB19"/>
</dbReference>
<dbReference type="VEuPathDB" id="FungiDB:YOR322C"/>
<dbReference type="eggNOG" id="ENOG502QS9U">
    <property type="taxonomic scope" value="Eukaryota"/>
</dbReference>
<dbReference type="HOGENOM" id="CLU_012509_0_0_1"/>
<dbReference type="InParanoid" id="Q12502"/>
<dbReference type="OMA" id="LRMQFKL"/>
<dbReference type="OrthoDB" id="3832628at2759"/>
<dbReference type="BioCyc" id="YEAST:G3O-33801-MONOMER"/>
<dbReference type="Reactome" id="R-SCE-844456">
    <property type="pathway name" value="The NLRP3 inflammasome"/>
</dbReference>
<dbReference type="BioGRID-ORCS" id="854500">
    <property type="hits" value="3 hits in 10 CRISPR screens"/>
</dbReference>
<dbReference type="ChiTaRS" id="LDB19">
    <property type="organism name" value="yeast"/>
</dbReference>
<dbReference type="PRO" id="PR:Q12502"/>
<dbReference type="Proteomes" id="UP000002311">
    <property type="component" value="Chromosome XV"/>
</dbReference>
<dbReference type="RNAct" id="Q12502">
    <property type="molecule type" value="protein"/>
</dbReference>
<dbReference type="GO" id="GO:0005737">
    <property type="term" value="C:cytoplasm"/>
    <property type="evidence" value="ECO:0000314"/>
    <property type="project" value="SGD"/>
</dbReference>
<dbReference type="GO" id="GO:0005829">
    <property type="term" value="C:cytosol"/>
    <property type="evidence" value="ECO:0000314"/>
    <property type="project" value="SGD"/>
</dbReference>
<dbReference type="GO" id="GO:0005794">
    <property type="term" value="C:Golgi apparatus"/>
    <property type="evidence" value="ECO:0000314"/>
    <property type="project" value="SGD"/>
</dbReference>
<dbReference type="GO" id="GO:0000138">
    <property type="term" value="C:Golgi trans cisterna"/>
    <property type="evidence" value="ECO:0000314"/>
    <property type="project" value="SGD"/>
</dbReference>
<dbReference type="GO" id="GO:0005886">
    <property type="term" value="C:plasma membrane"/>
    <property type="evidence" value="ECO:0000314"/>
    <property type="project" value="SGD"/>
</dbReference>
<dbReference type="GO" id="GO:0030674">
    <property type="term" value="F:protein-macromolecule adaptor activity"/>
    <property type="evidence" value="ECO:0000318"/>
    <property type="project" value="GO_Central"/>
</dbReference>
<dbReference type="GO" id="GO:0031625">
    <property type="term" value="F:ubiquitin protein ligase binding"/>
    <property type="evidence" value="ECO:0000314"/>
    <property type="project" value="SGD"/>
</dbReference>
<dbReference type="GO" id="GO:0071230">
    <property type="term" value="P:cellular response to amino acid stimulus"/>
    <property type="evidence" value="ECO:0000315"/>
    <property type="project" value="SGD"/>
</dbReference>
<dbReference type="GO" id="GO:0033554">
    <property type="term" value="P:cellular response to stress"/>
    <property type="evidence" value="ECO:0000315"/>
    <property type="project" value="SGD"/>
</dbReference>
<dbReference type="GO" id="GO:0002092">
    <property type="term" value="P:positive regulation of receptor internalization"/>
    <property type="evidence" value="ECO:0000315"/>
    <property type="project" value="SGD"/>
</dbReference>
<dbReference type="GO" id="GO:0070086">
    <property type="term" value="P:ubiquitin-dependent endocytosis"/>
    <property type="evidence" value="ECO:0000315"/>
    <property type="project" value="SGD"/>
</dbReference>
<dbReference type="Gene3D" id="2.60.40.640">
    <property type="match status" value="1"/>
</dbReference>
<dbReference type="InterPro" id="IPR014752">
    <property type="entry name" value="Arrestin-like_C"/>
</dbReference>
<dbReference type="InterPro" id="IPR050357">
    <property type="entry name" value="Arrestin_domain-protein"/>
</dbReference>
<dbReference type="InterPro" id="IPR024391">
    <property type="entry name" value="LDB19_N"/>
</dbReference>
<dbReference type="PANTHER" id="PTHR11188">
    <property type="entry name" value="ARRESTIN DOMAIN CONTAINING PROTEIN"/>
    <property type="match status" value="1"/>
</dbReference>
<dbReference type="PANTHER" id="PTHR11188:SF76">
    <property type="entry name" value="PROTEIN LDB19"/>
    <property type="match status" value="1"/>
</dbReference>
<dbReference type="Pfam" id="PF13002">
    <property type="entry name" value="LDB19"/>
    <property type="match status" value="1"/>
</dbReference>
<proteinExistence type="evidence at protein level"/>
<evidence type="ECO:0000256" key="1">
    <source>
        <dbReference type="SAM" id="MobiDB-lite"/>
    </source>
</evidence>
<evidence type="ECO:0000269" key="2">
    <source>
    </source>
</evidence>
<evidence type="ECO:0000269" key="3">
    <source>
    </source>
</evidence>
<evidence type="ECO:0000269" key="4">
    <source>
    </source>
</evidence>
<evidence type="ECO:0000269" key="5">
    <source>
    </source>
</evidence>
<evidence type="ECO:0000305" key="6"/>
<evidence type="ECO:0007744" key="7">
    <source>
    </source>
</evidence>
<evidence type="ECO:0007744" key="8">
    <source>
    </source>
</evidence>
<evidence type="ECO:0007744" key="9">
    <source>
    </source>
</evidence>
<protein>
    <recommendedName>
        <fullName>Protein LDB19</fullName>
    </recommendedName>
    <alternativeName>
        <fullName>Low dye-binding protein 19</fullName>
    </alternativeName>
</protein>
<accession>Q12502</accession>
<accession>D6W320</accession>
<organism>
    <name type="scientific">Saccharomyces cerevisiae (strain ATCC 204508 / S288c)</name>
    <name type="common">Baker's yeast</name>
    <dbReference type="NCBI Taxonomy" id="559292"/>
    <lineage>
        <taxon>Eukaryota</taxon>
        <taxon>Fungi</taxon>
        <taxon>Dikarya</taxon>
        <taxon>Ascomycota</taxon>
        <taxon>Saccharomycotina</taxon>
        <taxon>Saccharomycetes</taxon>
        <taxon>Saccharomycetales</taxon>
        <taxon>Saccharomycetaceae</taxon>
        <taxon>Saccharomyces</taxon>
    </lineage>
</organism>
<reference key="1">
    <citation type="journal article" date="1996" name="Yeast">
        <title>Sequencing of a 35.71 kb DNA segment on the right arm of yeast chromosome XV reveals regions of similarity to chromosomes I and XIII.</title>
        <authorList>
            <person name="Pearson B.M."/>
            <person name="Hernando Y."/>
            <person name="Payne J."/>
            <person name="Wolf S.S."/>
            <person name="Kalogeropoulos A."/>
            <person name="Schweizer M."/>
        </authorList>
    </citation>
    <scope>NUCLEOTIDE SEQUENCE [GENOMIC DNA]</scope>
    <source>
        <strain>ATCC 96604 / S288c / FY1679</strain>
    </source>
</reference>
<reference key="2">
    <citation type="journal article" date="1997" name="Nature">
        <title>The nucleotide sequence of Saccharomyces cerevisiae chromosome XV.</title>
        <authorList>
            <person name="Dujon B."/>
            <person name="Albermann K."/>
            <person name="Aldea M."/>
            <person name="Alexandraki D."/>
            <person name="Ansorge W."/>
            <person name="Arino J."/>
            <person name="Benes V."/>
            <person name="Bohn C."/>
            <person name="Bolotin-Fukuhara M."/>
            <person name="Bordonne R."/>
            <person name="Boyer J."/>
            <person name="Camasses A."/>
            <person name="Casamayor A."/>
            <person name="Casas C."/>
            <person name="Cheret G."/>
            <person name="Cziepluch C."/>
            <person name="Daignan-Fornier B."/>
            <person name="Dang V.-D."/>
            <person name="de Haan M."/>
            <person name="Delius H."/>
            <person name="Durand P."/>
            <person name="Fairhead C."/>
            <person name="Feldmann H."/>
            <person name="Gaillon L."/>
            <person name="Galisson F."/>
            <person name="Gamo F.-J."/>
            <person name="Gancedo C."/>
            <person name="Goffeau A."/>
            <person name="Goulding S.E."/>
            <person name="Grivell L.A."/>
            <person name="Habbig B."/>
            <person name="Hand N.J."/>
            <person name="Hani J."/>
            <person name="Hattenhorst U."/>
            <person name="Hebling U."/>
            <person name="Hernando Y."/>
            <person name="Herrero E."/>
            <person name="Heumann K."/>
            <person name="Hiesel R."/>
            <person name="Hilger F."/>
            <person name="Hofmann B."/>
            <person name="Hollenberg C.P."/>
            <person name="Hughes B."/>
            <person name="Jauniaux J.-C."/>
            <person name="Kalogeropoulos A."/>
            <person name="Katsoulou C."/>
            <person name="Kordes E."/>
            <person name="Lafuente M.J."/>
            <person name="Landt O."/>
            <person name="Louis E.J."/>
            <person name="Maarse A.C."/>
            <person name="Madania A."/>
            <person name="Mannhaupt G."/>
            <person name="Marck C."/>
            <person name="Martin R.P."/>
            <person name="Mewes H.-W."/>
            <person name="Michaux G."/>
            <person name="Paces V."/>
            <person name="Parle-McDermott A.G."/>
            <person name="Pearson B.M."/>
            <person name="Perrin A."/>
            <person name="Pettersson B."/>
            <person name="Poch O."/>
            <person name="Pohl T.M."/>
            <person name="Poirey R."/>
            <person name="Portetelle D."/>
            <person name="Pujol A."/>
            <person name="Purnelle B."/>
            <person name="Ramezani Rad M."/>
            <person name="Rechmann S."/>
            <person name="Schwager C."/>
            <person name="Schweizer M."/>
            <person name="Sor F."/>
            <person name="Sterky F."/>
            <person name="Tarassov I.A."/>
            <person name="Teodoru C."/>
            <person name="Tettelin H."/>
            <person name="Thierry A."/>
            <person name="Tobiasch E."/>
            <person name="Tzermia M."/>
            <person name="Uhlen M."/>
            <person name="Unseld M."/>
            <person name="Valens M."/>
            <person name="Vandenbol M."/>
            <person name="Vetter I."/>
            <person name="Vlcek C."/>
            <person name="Voet M."/>
            <person name="Volckaert G."/>
            <person name="Voss H."/>
            <person name="Wambutt R."/>
            <person name="Wedler H."/>
            <person name="Wiemann S."/>
            <person name="Winsor B."/>
            <person name="Wolfe K.H."/>
            <person name="Zollner A."/>
            <person name="Zumstein E."/>
            <person name="Kleine K."/>
        </authorList>
    </citation>
    <scope>NUCLEOTIDE SEQUENCE [LARGE SCALE GENOMIC DNA]</scope>
    <source>
        <strain>ATCC 204508 / S288c</strain>
    </source>
</reference>
<reference key="3">
    <citation type="journal article" date="2014" name="G3 (Bethesda)">
        <title>The reference genome sequence of Saccharomyces cerevisiae: Then and now.</title>
        <authorList>
            <person name="Engel S.R."/>
            <person name="Dietrich F.S."/>
            <person name="Fisk D.G."/>
            <person name="Binkley G."/>
            <person name="Balakrishnan R."/>
            <person name="Costanzo M.C."/>
            <person name="Dwight S.S."/>
            <person name="Hitz B.C."/>
            <person name="Karra K."/>
            <person name="Nash R.S."/>
            <person name="Weng S."/>
            <person name="Wong E.D."/>
            <person name="Lloyd P."/>
            <person name="Skrzypek M.S."/>
            <person name="Miyasato S.R."/>
            <person name="Simison M."/>
            <person name="Cherry J.M."/>
        </authorList>
    </citation>
    <scope>GENOME REANNOTATION</scope>
    <source>
        <strain>ATCC 204508 / S288c</strain>
    </source>
</reference>
<reference key="4">
    <citation type="journal article" date="1999" name="Yeast">
        <title>Chemotyping of yeast mutants using robotics.</title>
        <authorList>
            <person name="Rieger K.-J."/>
            <person name="El-Alama M."/>
            <person name="Stein G."/>
            <person name="Bradshaw C."/>
            <person name="Slonimski P.P."/>
            <person name="Maundrell K."/>
        </authorList>
    </citation>
    <scope>DRUG RESISTANCE</scope>
</reference>
<reference key="5">
    <citation type="journal article" date="2003" name="Nature">
        <title>Global analysis of protein localization in budding yeast.</title>
        <authorList>
            <person name="Huh W.-K."/>
            <person name="Falvo J.V."/>
            <person name="Gerke L.C."/>
            <person name="Carroll A.S."/>
            <person name="Howson R.W."/>
            <person name="Weissman J.S."/>
            <person name="O'Shea E.K."/>
        </authorList>
    </citation>
    <scope>SUBCELLULAR LOCATION [LARGE SCALE ANALYSIS]</scope>
</reference>
<reference key="6">
    <citation type="journal article" date="2003" name="Nature">
        <title>Global analysis of protein expression in yeast.</title>
        <authorList>
            <person name="Ghaemmaghami S."/>
            <person name="Huh W.-K."/>
            <person name="Bower K."/>
            <person name="Howson R.W."/>
            <person name="Belle A."/>
            <person name="Dephoure N."/>
            <person name="O'Shea E.K."/>
            <person name="Weissman J.S."/>
        </authorList>
    </citation>
    <scope>LEVEL OF PROTEIN EXPRESSION [LARGE SCALE ANALYSIS]</scope>
</reference>
<reference key="7">
    <citation type="journal article" date="2003" name="Proc. Natl. Acad. Sci. U.S.A.">
        <title>A subset of membrane-associated proteins is ubiquitinated in response to mutations in the endoplasmic reticulum degradation machinery.</title>
        <authorList>
            <person name="Hitchcock A.L."/>
            <person name="Auld K."/>
            <person name="Gygi S.P."/>
            <person name="Silver P.A."/>
        </authorList>
    </citation>
    <scope>UBIQUITINATION [LARGE SCALE ANALYSIS] AT LYS-486</scope>
    <scope>IDENTIFICATION BY MASS SPECTROMETRY</scope>
</reference>
<reference key="8">
    <citation type="journal article" date="2005" name="Fungal Genet. Biol.">
        <title>A genome-wide screen for Saccharomyces cerevisiae nonessential genes involved in mannosyl phosphate transfer to mannoprotein-linked oligosaccharides.</title>
        <authorList>
            <person name="Corbacho I."/>
            <person name="Olivero I."/>
            <person name="Hernandez L.M."/>
        </authorList>
    </citation>
    <scope>FUNCTION</scope>
</reference>
<reference key="9">
    <citation type="journal article" date="2005" name="Yeast">
        <title>New weakly expressed cell cycle-regulated genes in yeast.</title>
        <authorList>
            <person name="de Lichtenberg U."/>
            <person name="Wernersson R."/>
            <person name="Jensen T.S."/>
            <person name="Nielsen H.B."/>
            <person name="Fausboell A."/>
            <person name="Schmidt P."/>
            <person name="Hansen F.B."/>
            <person name="Knudsen S."/>
            <person name="Brunak S."/>
        </authorList>
    </citation>
    <scope>PERIODIC EXPRESSION DURING CELL CYCLE</scope>
</reference>
<reference key="10">
    <citation type="journal article" date="2007" name="J. Proteome Res.">
        <title>Large-scale phosphorylation analysis of alpha-factor-arrested Saccharomyces cerevisiae.</title>
        <authorList>
            <person name="Li X."/>
            <person name="Gerber S.A."/>
            <person name="Rudner A.D."/>
            <person name="Beausoleil S.A."/>
            <person name="Haas W."/>
            <person name="Villen J."/>
            <person name="Elias J.E."/>
            <person name="Gygi S.P."/>
        </authorList>
    </citation>
    <scope>PHOSPHORYLATION [LARGE SCALE ANALYSIS] AT THR-93</scope>
    <scope>IDENTIFICATION BY MASS SPECTROMETRY [LARGE SCALE ANALYSIS]</scope>
    <source>
        <strain>ADR376</strain>
    </source>
</reference>
<reference key="11">
    <citation type="journal article" date="2008" name="Mol. Cell. Proteomics">
        <title>A multidimensional chromatography technology for in-depth phosphoproteome analysis.</title>
        <authorList>
            <person name="Albuquerque C.P."/>
            <person name="Smolka M.B."/>
            <person name="Payne S.H."/>
            <person name="Bafna V."/>
            <person name="Eng J."/>
            <person name="Zhou H."/>
        </authorList>
    </citation>
    <scope>PHOSPHORYLATION [LARGE SCALE ANALYSIS] AT SER-384 AND THR-619</scope>
    <scope>IDENTIFICATION BY MASS SPECTROMETRY [LARGE SCALE ANALYSIS]</scope>
</reference>
<reference key="12">
    <citation type="journal article" date="2009" name="Science">
        <title>Global analysis of Cdk1 substrate phosphorylation sites provides insights into evolution.</title>
        <authorList>
            <person name="Holt L.J."/>
            <person name="Tuch B.B."/>
            <person name="Villen J."/>
            <person name="Johnson A.D."/>
            <person name="Gygi S.P."/>
            <person name="Morgan D.O."/>
        </authorList>
    </citation>
    <scope>PHOSPHORYLATION [LARGE SCALE ANALYSIS] AT SER-808</scope>
    <scope>IDENTIFICATION BY MASS SPECTROMETRY [LARGE SCALE ANALYSIS]</scope>
</reference>